<comment type="function">
    <text evidence="1">NAD-binding protein involved in the addition of a carboxymethylaminomethyl (cmnm) group at the wobble position (U34) of certain tRNAs, forming tRNA-cmnm(5)s(2)U34.</text>
</comment>
<comment type="cofactor">
    <cofactor evidence="1">
        <name>FAD</name>
        <dbReference type="ChEBI" id="CHEBI:57692"/>
    </cofactor>
</comment>
<comment type="subunit">
    <text evidence="1">Homodimer. Heterotetramer of two MnmE and two MnmG subunits.</text>
</comment>
<comment type="subcellular location">
    <subcellularLocation>
        <location evidence="1">Cytoplasm</location>
    </subcellularLocation>
</comment>
<comment type="similarity">
    <text evidence="1">Belongs to the MnmG family.</text>
</comment>
<feature type="chain" id="PRO_1000122756" description="tRNA uridine 5-carboxymethylaminomethyl modification enzyme MnmG">
    <location>
        <begin position="1"/>
        <end position="624"/>
    </location>
</feature>
<feature type="binding site" evidence="1">
    <location>
        <begin position="13"/>
        <end position="18"/>
    </location>
    <ligand>
        <name>FAD</name>
        <dbReference type="ChEBI" id="CHEBI:57692"/>
    </ligand>
</feature>
<feature type="binding site" evidence="1">
    <location>
        <position position="125"/>
    </location>
    <ligand>
        <name>FAD</name>
        <dbReference type="ChEBI" id="CHEBI:57692"/>
    </ligand>
</feature>
<feature type="binding site" evidence="1">
    <location>
        <position position="180"/>
    </location>
    <ligand>
        <name>FAD</name>
        <dbReference type="ChEBI" id="CHEBI:57692"/>
    </ligand>
</feature>
<feature type="binding site" evidence="1">
    <location>
        <begin position="272"/>
        <end position="286"/>
    </location>
    <ligand>
        <name>NAD(+)</name>
        <dbReference type="ChEBI" id="CHEBI:57540"/>
    </ligand>
</feature>
<feature type="binding site" evidence="1">
    <location>
        <position position="369"/>
    </location>
    <ligand>
        <name>FAD</name>
        <dbReference type="ChEBI" id="CHEBI:57692"/>
    </ligand>
</feature>
<proteinExistence type="inferred from homology"/>
<keyword id="KW-0963">Cytoplasm</keyword>
<keyword id="KW-0274">FAD</keyword>
<keyword id="KW-0285">Flavoprotein</keyword>
<keyword id="KW-0520">NAD</keyword>
<keyword id="KW-1185">Reference proteome</keyword>
<keyword id="KW-0819">tRNA processing</keyword>
<reference key="1">
    <citation type="submission" date="2008-08" db="EMBL/GenBank/DDBJ databases">
        <title>The complete genome sequence of Thermodesulfovibrio yellowstonii strain ATCC 51303 / DSM 11347 / YP87.</title>
        <authorList>
            <person name="Dodson R.J."/>
            <person name="Durkin A.S."/>
            <person name="Wu M."/>
            <person name="Eisen J."/>
            <person name="Sutton G."/>
        </authorList>
    </citation>
    <scope>NUCLEOTIDE SEQUENCE [LARGE SCALE GENOMIC DNA]</scope>
    <source>
        <strain>ATCC 51303 / DSM 11347 / YP87</strain>
    </source>
</reference>
<organism>
    <name type="scientific">Thermodesulfovibrio yellowstonii (strain ATCC 51303 / DSM 11347 / YP87)</name>
    <dbReference type="NCBI Taxonomy" id="289376"/>
    <lineage>
        <taxon>Bacteria</taxon>
        <taxon>Pseudomonadati</taxon>
        <taxon>Nitrospirota</taxon>
        <taxon>Thermodesulfovibrionia</taxon>
        <taxon>Thermodesulfovibrionales</taxon>
        <taxon>Thermodesulfovibrionaceae</taxon>
        <taxon>Thermodesulfovibrio</taxon>
    </lineage>
</organism>
<name>MNMG_THEYD</name>
<evidence type="ECO:0000255" key="1">
    <source>
        <dbReference type="HAMAP-Rule" id="MF_00129"/>
    </source>
</evidence>
<accession>B5YJL3</accession>
<protein>
    <recommendedName>
        <fullName evidence="1">tRNA uridine 5-carboxymethylaminomethyl modification enzyme MnmG</fullName>
    </recommendedName>
    <alternativeName>
        <fullName evidence="1">Glucose-inhibited division protein A</fullName>
    </alternativeName>
</protein>
<sequence length="624" mass="69865">MYKEKDFDIIVVGAGHAGCEAALATAKMGLQTALFTIYLETIAQLSCNPAIGGLAKGHLVREIDALGGIMAKVTDMAGIQFRMLNRSKGPAVWSLRAQADRILYNIYMRKILESTENLAIKQAMVEEIVVENGKVKGIITSLGVFYGAKAVIITPGTFLNGLIHIGLDSFEAGRAGEFPSKKLSESIKKLGLKMGRLKTGTPPRIDAKTIDFSKTEEQGGDDPPIPFSYSTKKINNPQVPCYITYTNEKTHEIILNNLDRSPLYSGKIKGIGPRYCPSIEDKVVKFRDKSRHQIFLEPEGLSRKEYYANGIPTSLPYDVQVAFVRTIPGLEDAEIMRPGYAIEYDFVYPTQIRHTLEVKGIEGLYLAGQINGTSGYEEAAAQGLMAGINAALKIKKQPPLILGRDEAYIGVLIDDLVTKGTQEPYRMFTSRAEFRLLLRHDNADLRLRDYGYKIGLVDEETYEEFNKKKELLQREIKRLKTTTIKPSEELNKALIEAQTTPVEEATFLDKLLKRPELNYDFIKKFAPSEVTLTKELEELVEIHIKYEGYIAKQMELVERMKQFEEKLIPENFDFNIPGLSREVIQKLTEVAPRTIGQAMRIPGVTPAAISILMVAVQKKTTVKK</sequence>
<dbReference type="EMBL" id="CP001147">
    <property type="protein sequence ID" value="ACI21694.1"/>
    <property type="molecule type" value="Genomic_DNA"/>
</dbReference>
<dbReference type="RefSeq" id="WP_012546402.1">
    <property type="nucleotide sequence ID" value="NC_011296.1"/>
</dbReference>
<dbReference type="RefSeq" id="YP_002248428.1">
    <property type="nucleotide sequence ID" value="NC_011296.1"/>
</dbReference>
<dbReference type="SMR" id="B5YJL3"/>
<dbReference type="FunCoup" id="B5YJL3">
    <property type="interactions" value="468"/>
</dbReference>
<dbReference type="STRING" id="289376.THEYE_A0585"/>
<dbReference type="EnsemblBacteria" id="ACI21694">
    <property type="protein sequence ID" value="ACI21694"/>
    <property type="gene ID" value="THEYE_A0585"/>
</dbReference>
<dbReference type="KEGG" id="tye:THEYE_A0585"/>
<dbReference type="PATRIC" id="fig|289376.4.peg.579"/>
<dbReference type="eggNOG" id="COG0445">
    <property type="taxonomic scope" value="Bacteria"/>
</dbReference>
<dbReference type="HOGENOM" id="CLU_007831_2_2_0"/>
<dbReference type="InParanoid" id="B5YJL3"/>
<dbReference type="OrthoDB" id="9815560at2"/>
<dbReference type="Proteomes" id="UP000000718">
    <property type="component" value="Chromosome"/>
</dbReference>
<dbReference type="GO" id="GO:0005829">
    <property type="term" value="C:cytosol"/>
    <property type="evidence" value="ECO:0000318"/>
    <property type="project" value="GO_Central"/>
</dbReference>
<dbReference type="GO" id="GO:0050660">
    <property type="term" value="F:flavin adenine dinucleotide binding"/>
    <property type="evidence" value="ECO:0000318"/>
    <property type="project" value="GO_Central"/>
</dbReference>
<dbReference type="GO" id="GO:0030488">
    <property type="term" value="P:tRNA methylation"/>
    <property type="evidence" value="ECO:0000318"/>
    <property type="project" value="GO_Central"/>
</dbReference>
<dbReference type="GO" id="GO:0002098">
    <property type="term" value="P:tRNA wobble uridine modification"/>
    <property type="evidence" value="ECO:0000318"/>
    <property type="project" value="GO_Central"/>
</dbReference>
<dbReference type="FunFam" id="1.10.10.1800:FF:000001">
    <property type="entry name" value="tRNA uridine 5-carboxymethylaminomethyl modification enzyme MnmG"/>
    <property type="match status" value="1"/>
</dbReference>
<dbReference type="FunFam" id="1.10.150.570:FF:000001">
    <property type="entry name" value="tRNA uridine 5-carboxymethylaminomethyl modification enzyme MnmG"/>
    <property type="match status" value="1"/>
</dbReference>
<dbReference type="FunFam" id="3.50.50.60:FF:000002">
    <property type="entry name" value="tRNA uridine 5-carboxymethylaminomethyl modification enzyme MnmG"/>
    <property type="match status" value="1"/>
</dbReference>
<dbReference type="FunFam" id="3.50.50.60:FF:000010">
    <property type="entry name" value="tRNA uridine 5-carboxymethylaminomethyl modification enzyme MnmG"/>
    <property type="match status" value="1"/>
</dbReference>
<dbReference type="Gene3D" id="3.50.50.60">
    <property type="entry name" value="FAD/NAD(P)-binding domain"/>
    <property type="match status" value="2"/>
</dbReference>
<dbReference type="Gene3D" id="1.10.150.570">
    <property type="entry name" value="GidA associated domain, C-terminal subdomain"/>
    <property type="match status" value="1"/>
</dbReference>
<dbReference type="Gene3D" id="1.10.10.1800">
    <property type="entry name" value="tRNA uridine 5-carboxymethylaminomethyl modification enzyme MnmG/GidA"/>
    <property type="match status" value="1"/>
</dbReference>
<dbReference type="HAMAP" id="MF_00129">
    <property type="entry name" value="MnmG_GidA"/>
    <property type="match status" value="1"/>
</dbReference>
<dbReference type="InterPro" id="IPR036188">
    <property type="entry name" value="FAD/NAD-bd_sf"/>
</dbReference>
<dbReference type="InterPro" id="IPR049312">
    <property type="entry name" value="GIDA_C_N"/>
</dbReference>
<dbReference type="InterPro" id="IPR004416">
    <property type="entry name" value="MnmG"/>
</dbReference>
<dbReference type="InterPro" id="IPR002218">
    <property type="entry name" value="MnmG-rel"/>
</dbReference>
<dbReference type="InterPro" id="IPR020595">
    <property type="entry name" value="MnmG-rel_CS"/>
</dbReference>
<dbReference type="InterPro" id="IPR026904">
    <property type="entry name" value="MnmG_C"/>
</dbReference>
<dbReference type="InterPro" id="IPR047001">
    <property type="entry name" value="MnmG_C_subdom"/>
</dbReference>
<dbReference type="InterPro" id="IPR044920">
    <property type="entry name" value="MnmG_C_subdom_sf"/>
</dbReference>
<dbReference type="InterPro" id="IPR040131">
    <property type="entry name" value="MnmG_N"/>
</dbReference>
<dbReference type="NCBIfam" id="TIGR00136">
    <property type="entry name" value="mnmG_gidA"/>
    <property type="match status" value="1"/>
</dbReference>
<dbReference type="PANTHER" id="PTHR11806">
    <property type="entry name" value="GLUCOSE INHIBITED DIVISION PROTEIN A"/>
    <property type="match status" value="1"/>
</dbReference>
<dbReference type="PANTHER" id="PTHR11806:SF0">
    <property type="entry name" value="PROTEIN MTO1 HOMOLOG, MITOCHONDRIAL"/>
    <property type="match status" value="1"/>
</dbReference>
<dbReference type="Pfam" id="PF01134">
    <property type="entry name" value="GIDA"/>
    <property type="match status" value="1"/>
</dbReference>
<dbReference type="Pfam" id="PF21680">
    <property type="entry name" value="GIDA_C_1st"/>
    <property type="match status" value="1"/>
</dbReference>
<dbReference type="Pfam" id="PF13932">
    <property type="entry name" value="SAM_GIDA_C"/>
    <property type="match status" value="1"/>
</dbReference>
<dbReference type="SMART" id="SM01228">
    <property type="entry name" value="GIDA_assoc_3"/>
    <property type="match status" value="1"/>
</dbReference>
<dbReference type="SUPFAM" id="SSF51905">
    <property type="entry name" value="FAD/NAD(P)-binding domain"/>
    <property type="match status" value="1"/>
</dbReference>
<dbReference type="PROSITE" id="PS01280">
    <property type="entry name" value="GIDA_1"/>
    <property type="match status" value="1"/>
</dbReference>
<dbReference type="PROSITE" id="PS01281">
    <property type="entry name" value="GIDA_2"/>
    <property type="match status" value="1"/>
</dbReference>
<gene>
    <name evidence="1" type="primary">mnmG</name>
    <name evidence="1" type="synonym">gidA</name>
    <name type="ordered locus">THEYE_A0585</name>
</gene>